<gene>
    <name evidence="1" type="primary">rnc</name>
    <name type="ordered locus">CF0664</name>
</gene>
<evidence type="ECO:0000255" key="1">
    <source>
        <dbReference type="HAMAP-Rule" id="MF_00104"/>
    </source>
</evidence>
<feature type="chain" id="PRO_1000075738" description="Ribonuclease 3">
    <location>
        <begin position="1"/>
        <end position="237"/>
    </location>
</feature>
<feature type="domain" description="RNase III" evidence="1">
    <location>
        <begin position="7"/>
        <end position="135"/>
    </location>
</feature>
<feature type="domain" description="DRBM" evidence="1">
    <location>
        <begin position="160"/>
        <end position="229"/>
    </location>
</feature>
<feature type="active site" evidence="1">
    <location>
        <position position="52"/>
    </location>
</feature>
<feature type="active site" evidence="1">
    <location>
        <position position="124"/>
    </location>
</feature>
<feature type="binding site" evidence="1">
    <location>
        <position position="48"/>
    </location>
    <ligand>
        <name>Mg(2+)</name>
        <dbReference type="ChEBI" id="CHEBI:18420"/>
    </ligand>
</feature>
<feature type="binding site" evidence="1">
    <location>
        <position position="121"/>
    </location>
    <ligand>
        <name>Mg(2+)</name>
        <dbReference type="ChEBI" id="CHEBI:18420"/>
    </ligand>
</feature>
<feature type="binding site" evidence="1">
    <location>
        <position position="124"/>
    </location>
    <ligand>
        <name>Mg(2+)</name>
        <dbReference type="ChEBI" id="CHEBI:18420"/>
    </ligand>
</feature>
<name>RNC_CHLFF</name>
<comment type="function">
    <text evidence="1">Digests double-stranded RNA. Involved in the processing of primary rRNA transcript to yield the immediate precursors to the large and small rRNAs (23S and 16S). Processes some mRNAs, and tRNAs when they are encoded in the rRNA operon. Processes pre-crRNA and tracrRNA of type II CRISPR loci if present in the organism.</text>
</comment>
<comment type="catalytic activity">
    <reaction evidence="1">
        <text>Endonucleolytic cleavage to 5'-phosphomonoester.</text>
        <dbReference type="EC" id="3.1.26.3"/>
    </reaction>
</comment>
<comment type="cofactor">
    <cofactor evidence="1">
        <name>Mg(2+)</name>
        <dbReference type="ChEBI" id="CHEBI:18420"/>
    </cofactor>
</comment>
<comment type="subunit">
    <text evidence="1">Homodimer.</text>
</comment>
<comment type="subcellular location">
    <subcellularLocation>
        <location evidence="1">Cytoplasm</location>
    </subcellularLocation>
</comment>
<comment type="similarity">
    <text evidence="1">Belongs to the ribonuclease III family.</text>
</comment>
<protein>
    <recommendedName>
        <fullName evidence="1">Ribonuclease 3</fullName>
        <ecNumber evidence="1">3.1.26.3</ecNumber>
    </recommendedName>
    <alternativeName>
        <fullName evidence="1">Ribonuclease III</fullName>
        <shortName evidence="1">RNase III</shortName>
    </alternativeName>
</protein>
<reference key="1">
    <citation type="journal article" date="2006" name="DNA Res.">
        <title>Genome sequence of the cat pathogen, Chlamydophila felis.</title>
        <authorList>
            <person name="Azuma Y."/>
            <person name="Hirakawa H."/>
            <person name="Yamashita A."/>
            <person name="Cai Y."/>
            <person name="Rahman M.A."/>
            <person name="Suzuki H."/>
            <person name="Mitaku S."/>
            <person name="Toh H."/>
            <person name="Goto S."/>
            <person name="Murakami T."/>
            <person name="Sugi K."/>
            <person name="Hayashi H."/>
            <person name="Fukushi H."/>
            <person name="Hattori M."/>
            <person name="Kuhara S."/>
            <person name="Shirai M."/>
        </authorList>
    </citation>
    <scope>NUCLEOTIDE SEQUENCE [LARGE SCALE GENOMIC DNA]</scope>
    <source>
        <strain>Fe/C-56</strain>
    </source>
</reference>
<dbReference type="EC" id="3.1.26.3" evidence="1"/>
<dbReference type="EMBL" id="AP006861">
    <property type="protein sequence ID" value="BAE81436.1"/>
    <property type="molecule type" value="Genomic_DNA"/>
</dbReference>
<dbReference type="RefSeq" id="WP_011458215.1">
    <property type="nucleotide sequence ID" value="NC_007899.1"/>
</dbReference>
<dbReference type="SMR" id="Q253V2"/>
<dbReference type="STRING" id="264202.CF0664"/>
<dbReference type="KEGG" id="cfe:CF0664"/>
<dbReference type="eggNOG" id="COG0571">
    <property type="taxonomic scope" value="Bacteria"/>
</dbReference>
<dbReference type="HOGENOM" id="CLU_000907_1_3_0"/>
<dbReference type="OrthoDB" id="9805026at2"/>
<dbReference type="Proteomes" id="UP000001260">
    <property type="component" value="Chromosome"/>
</dbReference>
<dbReference type="GO" id="GO:0005737">
    <property type="term" value="C:cytoplasm"/>
    <property type="evidence" value="ECO:0007669"/>
    <property type="project" value="UniProtKB-SubCell"/>
</dbReference>
<dbReference type="GO" id="GO:0003725">
    <property type="term" value="F:double-stranded RNA binding"/>
    <property type="evidence" value="ECO:0007669"/>
    <property type="project" value="TreeGrafter"/>
</dbReference>
<dbReference type="GO" id="GO:0046872">
    <property type="term" value="F:metal ion binding"/>
    <property type="evidence" value="ECO:0007669"/>
    <property type="project" value="UniProtKB-KW"/>
</dbReference>
<dbReference type="GO" id="GO:0004525">
    <property type="term" value="F:ribonuclease III activity"/>
    <property type="evidence" value="ECO:0007669"/>
    <property type="project" value="UniProtKB-UniRule"/>
</dbReference>
<dbReference type="GO" id="GO:0019843">
    <property type="term" value="F:rRNA binding"/>
    <property type="evidence" value="ECO:0007669"/>
    <property type="project" value="UniProtKB-KW"/>
</dbReference>
<dbReference type="GO" id="GO:0006397">
    <property type="term" value="P:mRNA processing"/>
    <property type="evidence" value="ECO:0007669"/>
    <property type="project" value="UniProtKB-UniRule"/>
</dbReference>
<dbReference type="GO" id="GO:0010468">
    <property type="term" value="P:regulation of gene expression"/>
    <property type="evidence" value="ECO:0007669"/>
    <property type="project" value="TreeGrafter"/>
</dbReference>
<dbReference type="GO" id="GO:0006364">
    <property type="term" value="P:rRNA processing"/>
    <property type="evidence" value="ECO:0007669"/>
    <property type="project" value="UniProtKB-UniRule"/>
</dbReference>
<dbReference type="GO" id="GO:0008033">
    <property type="term" value="P:tRNA processing"/>
    <property type="evidence" value="ECO:0007669"/>
    <property type="project" value="UniProtKB-KW"/>
</dbReference>
<dbReference type="CDD" id="cd10845">
    <property type="entry name" value="DSRM_RNAse_III_family"/>
    <property type="match status" value="1"/>
</dbReference>
<dbReference type="CDD" id="cd00593">
    <property type="entry name" value="RIBOc"/>
    <property type="match status" value="1"/>
</dbReference>
<dbReference type="FunFam" id="1.10.1520.10:FF:000001">
    <property type="entry name" value="Ribonuclease 3"/>
    <property type="match status" value="1"/>
</dbReference>
<dbReference type="FunFam" id="3.30.160.20:FF:000083">
    <property type="entry name" value="Ribonuclease 3"/>
    <property type="match status" value="1"/>
</dbReference>
<dbReference type="Gene3D" id="3.30.160.20">
    <property type="match status" value="1"/>
</dbReference>
<dbReference type="Gene3D" id="1.10.1520.10">
    <property type="entry name" value="Ribonuclease III domain"/>
    <property type="match status" value="1"/>
</dbReference>
<dbReference type="HAMAP" id="MF_00104">
    <property type="entry name" value="RNase_III"/>
    <property type="match status" value="1"/>
</dbReference>
<dbReference type="InterPro" id="IPR014720">
    <property type="entry name" value="dsRBD_dom"/>
</dbReference>
<dbReference type="InterPro" id="IPR011907">
    <property type="entry name" value="RNase_III"/>
</dbReference>
<dbReference type="InterPro" id="IPR000999">
    <property type="entry name" value="RNase_III_dom"/>
</dbReference>
<dbReference type="InterPro" id="IPR036389">
    <property type="entry name" value="RNase_III_sf"/>
</dbReference>
<dbReference type="NCBIfam" id="TIGR02191">
    <property type="entry name" value="RNaseIII"/>
    <property type="match status" value="1"/>
</dbReference>
<dbReference type="PANTHER" id="PTHR11207:SF0">
    <property type="entry name" value="RIBONUCLEASE 3"/>
    <property type="match status" value="1"/>
</dbReference>
<dbReference type="PANTHER" id="PTHR11207">
    <property type="entry name" value="RIBONUCLEASE III"/>
    <property type="match status" value="1"/>
</dbReference>
<dbReference type="Pfam" id="PF00035">
    <property type="entry name" value="dsrm"/>
    <property type="match status" value="1"/>
</dbReference>
<dbReference type="Pfam" id="PF14622">
    <property type="entry name" value="Ribonucleas_3_3"/>
    <property type="match status" value="1"/>
</dbReference>
<dbReference type="SMART" id="SM00358">
    <property type="entry name" value="DSRM"/>
    <property type="match status" value="1"/>
</dbReference>
<dbReference type="SMART" id="SM00535">
    <property type="entry name" value="RIBOc"/>
    <property type="match status" value="1"/>
</dbReference>
<dbReference type="SUPFAM" id="SSF54768">
    <property type="entry name" value="dsRNA-binding domain-like"/>
    <property type="match status" value="1"/>
</dbReference>
<dbReference type="SUPFAM" id="SSF69065">
    <property type="entry name" value="RNase III domain-like"/>
    <property type="match status" value="1"/>
</dbReference>
<dbReference type="PROSITE" id="PS50137">
    <property type="entry name" value="DS_RBD"/>
    <property type="match status" value="1"/>
</dbReference>
<dbReference type="PROSITE" id="PS00517">
    <property type="entry name" value="RNASE_3_1"/>
    <property type="match status" value="1"/>
</dbReference>
<dbReference type="PROSITE" id="PS50142">
    <property type="entry name" value="RNASE_3_2"/>
    <property type="match status" value="1"/>
</dbReference>
<organism>
    <name type="scientific">Chlamydia felis (strain Fe/C-56)</name>
    <name type="common">Chlamydophila felis</name>
    <dbReference type="NCBI Taxonomy" id="264202"/>
    <lineage>
        <taxon>Bacteria</taxon>
        <taxon>Pseudomonadati</taxon>
        <taxon>Chlamydiota</taxon>
        <taxon>Chlamydiia</taxon>
        <taxon>Chlamydiales</taxon>
        <taxon>Chlamydiaceae</taxon>
        <taxon>Chlamydia/Chlamydophila group</taxon>
        <taxon>Chlamydia</taxon>
    </lineage>
</organism>
<sequence length="237" mass="26274">MNNLINIKEVEAKLKFTFTQPQLLVTALTHPSYRNETVTITEDSERLEFLGDAVLCLIVTEHLFLLFPSMDEGTLSTARAALINAVSCCQYTDALGLGEYLLIGKGERIQNERGRTSAYANLFEAILGAVYLDGGLAPARQITVPLLPSKKDILPLMLGNPKNRLQQLTQKQLRTLPVYQSTPWISPQGAPGYHIRVIVNDEIWGEGFALSKKEAEKLAAQEALDANDYKDKNTVDL</sequence>
<keyword id="KW-0963">Cytoplasm</keyword>
<keyword id="KW-0255">Endonuclease</keyword>
<keyword id="KW-0378">Hydrolase</keyword>
<keyword id="KW-0460">Magnesium</keyword>
<keyword id="KW-0479">Metal-binding</keyword>
<keyword id="KW-0507">mRNA processing</keyword>
<keyword id="KW-0540">Nuclease</keyword>
<keyword id="KW-0694">RNA-binding</keyword>
<keyword id="KW-0698">rRNA processing</keyword>
<keyword id="KW-0699">rRNA-binding</keyword>
<keyword id="KW-0819">tRNA processing</keyword>
<proteinExistence type="inferred from homology"/>
<accession>Q253V2</accession>